<accession>Q75HE5</accession>
<accession>Q27JE5</accession>
<sequence>MGMGMRRERDAEAELNLPPGFRFHPTDDELVEHYLCRKAAGQRLPVPIIAEVDLYKFDPWDLPERALFGAREWYFFTPRDRKYPNGSRPNRAAGNGYWKATGADKPVAPRGRTLGIKKALVFYAGKAPRGVKTDWIMHEYRLADAGRAAAGAKKGSLRLDDWVLCRLYNKKNEWEKMQQGKEVKEEASDMVTSQSHSHTHSWGETRTPESEIVDNDPFPELDSFPAFQPAPPPATAMMVPKKESMDDATAAAAAAATIPRNNSSLFVDLSYDDIQGMYSGLDMLPPGDDFYSSLFASPRVKGTTPRAGAGMGMVPF</sequence>
<organism>
    <name type="scientific">Oryza sativa subsp. japonica</name>
    <name type="common">Rice</name>
    <dbReference type="NCBI Taxonomy" id="39947"/>
    <lineage>
        <taxon>Eukaryota</taxon>
        <taxon>Viridiplantae</taxon>
        <taxon>Streptophyta</taxon>
        <taxon>Embryophyta</taxon>
        <taxon>Tracheophyta</taxon>
        <taxon>Spermatophyta</taxon>
        <taxon>Magnoliopsida</taxon>
        <taxon>Liliopsida</taxon>
        <taxon>Poales</taxon>
        <taxon>Poaceae</taxon>
        <taxon>BOP clade</taxon>
        <taxon>Oryzoideae</taxon>
        <taxon>Oryzeae</taxon>
        <taxon>Oryzinae</taxon>
        <taxon>Oryza</taxon>
        <taxon>Oryza sativa</taxon>
    </lineage>
</organism>
<name>NAC2_ORYSJ</name>
<gene>
    <name evidence="6" type="primary">NAC002</name>
    <name evidence="8" type="synonym">NAC19</name>
    <name evidence="7" type="synonym">SNAC1</name>
    <name evidence="11" type="ordered locus">Os03g0815100</name>
    <name evidence="10" type="ordered locus">LOC_Os03g60080</name>
    <name evidence="12" type="ORF">OsJ_13092</name>
    <name evidence="9" type="ORF">OSJNBa0024F18.3</name>
</gene>
<reference key="1">
    <citation type="journal article" date="2007" name="Plant Sci.">
        <title>Rice gene OsNAC19 encodes a novel NAC-domain transcription factor and responds to infection by Magnaporthe grisea.</title>
        <authorList>
            <person name="Lin R."/>
            <person name="Zhao W."/>
            <person name="Meng X."/>
            <person name="Wang M."/>
            <person name="Peng Y."/>
        </authorList>
        <dbReference type="AGRICOLA" id="IND43855822"/>
    </citation>
    <scope>NUCLEOTIDE SEQUENCE [MRNA]</scope>
</reference>
<reference key="2">
    <citation type="journal article" date="2005" name="Genome Res.">
        <title>Sequence, annotation, and analysis of synteny between rice chromosome 3 and diverged grass species.</title>
        <authorList>
            <consortium name="The rice chromosome 3 sequencing consortium"/>
            <person name="Buell C.R."/>
            <person name="Yuan Q."/>
            <person name="Ouyang S."/>
            <person name="Liu J."/>
            <person name="Zhu W."/>
            <person name="Wang A."/>
            <person name="Maiti R."/>
            <person name="Haas B."/>
            <person name="Wortman J."/>
            <person name="Pertea M."/>
            <person name="Jones K.M."/>
            <person name="Kim M."/>
            <person name="Overton L."/>
            <person name="Tsitrin T."/>
            <person name="Fadrosh D."/>
            <person name="Bera J."/>
            <person name="Weaver B."/>
            <person name="Jin S."/>
            <person name="Johri S."/>
            <person name="Reardon M."/>
            <person name="Webb K."/>
            <person name="Hill J."/>
            <person name="Moffat K."/>
            <person name="Tallon L."/>
            <person name="Van Aken S."/>
            <person name="Lewis M."/>
            <person name="Utterback T."/>
            <person name="Feldblyum T."/>
            <person name="Zismann V."/>
            <person name="Iobst S."/>
            <person name="Hsiao J."/>
            <person name="de Vazeille A.R."/>
            <person name="Salzberg S.L."/>
            <person name="White O."/>
            <person name="Fraser C.M."/>
            <person name="Yu Y."/>
            <person name="Kim H."/>
            <person name="Rambo T."/>
            <person name="Currie J."/>
            <person name="Collura K."/>
            <person name="Kernodle-Thompson S."/>
            <person name="Wei F."/>
            <person name="Kudrna K."/>
            <person name="Ammiraju J.S.S."/>
            <person name="Luo M."/>
            <person name="Goicoechea J.L."/>
            <person name="Wing R.A."/>
            <person name="Henry D."/>
            <person name="Oates R."/>
            <person name="Palmer M."/>
            <person name="Pries G."/>
            <person name="Saski C."/>
            <person name="Simmons J."/>
            <person name="Soderlund C."/>
            <person name="Nelson W."/>
            <person name="de la Bastide M."/>
            <person name="Spiegel L."/>
            <person name="Nascimento L."/>
            <person name="Huang E."/>
            <person name="Preston R."/>
            <person name="Zutavern T."/>
            <person name="Palmer L."/>
            <person name="O'Shaughnessy A."/>
            <person name="Dike S."/>
            <person name="McCombie W.R."/>
            <person name="Minx P."/>
            <person name="Cordum H."/>
            <person name="Wilson R."/>
            <person name="Jin W."/>
            <person name="Lee H.R."/>
            <person name="Jiang J."/>
            <person name="Jackson S."/>
        </authorList>
    </citation>
    <scope>NUCLEOTIDE SEQUENCE [LARGE SCALE GENOMIC DNA]</scope>
    <source>
        <strain>cv. Nipponbare</strain>
    </source>
</reference>
<reference key="3">
    <citation type="journal article" date="2005" name="Nature">
        <title>The map-based sequence of the rice genome.</title>
        <authorList>
            <consortium name="International rice genome sequencing project (IRGSP)"/>
        </authorList>
    </citation>
    <scope>NUCLEOTIDE SEQUENCE [LARGE SCALE GENOMIC DNA]</scope>
    <source>
        <strain>cv. Nipponbare</strain>
    </source>
</reference>
<reference key="4">
    <citation type="journal article" date="2008" name="Nucleic Acids Res.">
        <title>The rice annotation project database (RAP-DB): 2008 update.</title>
        <authorList>
            <consortium name="The rice annotation project (RAP)"/>
        </authorList>
    </citation>
    <scope>GENOME REANNOTATION</scope>
    <source>
        <strain>cv. Nipponbare</strain>
    </source>
</reference>
<reference key="5">
    <citation type="journal article" date="2013" name="Rice">
        <title>Improvement of the Oryza sativa Nipponbare reference genome using next generation sequence and optical map data.</title>
        <authorList>
            <person name="Kawahara Y."/>
            <person name="de la Bastide M."/>
            <person name="Hamilton J.P."/>
            <person name="Kanamori H."/>
            <person name="McCombie W.R."/>
            <person name="Ouyang S."/>
            <person name="Schwartz D.C."/>
            <person name="Tanaka T."/>
            <person name="Wu J."/>
            <person name="Zhou S."/>
            <person name="Childs K.L."/>
            <person name="Davidson R.M."/>
            <person name="Lin H."/>
            <person name="Quesada-Ocampo L."/>
            <person name="Vaillancourt B."/>
            <person name="Sakai H."/>
            <person name="Lee S.S."/>
            <person name="Kim J."/>
            <person name="Numa H."/>
            <person name="Itoh T."/>
            <person name="Buell C.R."/>
            <person name="Matsumoto T."/>
        </authorList>
    </citation>
    <scope>GENOME REANNOTATION</scope>
    <source>
        <strain>cv. Nipponbare</strain>
    </source>
</reference>
<reference key="6">
    <citation type="journal article" date="2005" name="PLoS Biol.">
        <title>The genomes of Oryza sativa: a history of duplications.</title>
        <authorList>
            <person name="Yu J."/>
            <person name="Wang J."/>
            <person name="Lin W."/>
            <person name="Li S."/>
            <person name="Li H."/>
            <person name="Zhou J."/>
            <person name="Ni P."/>
            <person name="Dong W."/>
            <person name="Hu S."/>
            <person name="Zeng C."/>
            <person name="Zhang J."/>
            <person name="Zhang Y."/>
            <person name="Li R."/>
            <person name="Xu Z."/>
            <person name="Li S."/>
            <person name="Li X."/>
            <person name="Zheng H."/>
            <person name="Cong L."/>
            <person name="Lin L."/>
            <person name="Yin J."/>
            <person name="Geng J."/>
            <person name="Li G."/>
            <person name="Shi J."/>
            <person name="Liu J."/>
            <person name="Lv H."/>
            <person name="Li J."/>
            <person name="Wang J."/>
            <person name="Deng Y."/>
            <person name="Ran L."/>
            <person name="Shi X."/>
            <person name="Wang X."/>
            <person name="Wu Q."/>
            <person name="Li C."/>
            <person name="Ren X."/>
            <person name="Wang J."/>
            <person name="Wang X."/>
            <person name="Li D."/>
            <person name="Liu D."/>
            <person name="Zhang X."/>
            <person name="Ji Z."/>
            <person name="Zhao W."/>
            <person name="Sun Y."/>
            <person name="Zhang Z."/>
            <person name="Bao J."/>
            <person name="Han Y."/>
            <person name="Dong L."/>
            <person name="Ji J."/>
            <person name="Chen P."/>
            <person name="Wu S."/>
            <person name="Liu J."/>
            <person name="Xiao Y."/>
            <person name="Bu D."/>
            <person name="Tan J."/>
            <person name="Yang L."/>
            <person name="Ye C."/>
            <person name="Zhang J."/>
            <person name="Xu J."/>
            <person name="Zhou Y."/>
            <person name="Yu Y."/>
            <person name="Zhang B."/>
            <person name="Zhuang S."/>
            <person name="Wei H."/>
            <person name="Liu B."/>
            <person name="Lei M."/>
            <person name="Yu H."/>
            <person name="Li Y."/>
            <person name="Xu H."/>
            <person name="Wei S."/>
            <person name="He X."/>
            <person name="Fang L."/>
            <person name="Zhang Z."/>
            <person name="Zhang Y."/>
            <person name="Huang X."/>
            <person name="Su Z."/>
            <person name="Tong W."/>
            <person name="Li J."/>
            <person name="Tong Z."/>
            <person name="Li S."/>
            <person name="Ye J."/>
            <person name="Wang L."/>
            <person name="Fang L."/>
            <person name="Lei T."/>
            <person name="Chen C.-S."/>
            <person name="Chen H.-C."/>
            <person name="Xu Z."/>
            <person name="Li H."/>
            <person name="Huang H."/>
            <person name="Zhang F."/>
            <person name="Xu H."/>
            <person name="Li N."/>
            <person name="Zhao C."/>
            <person name="Li S."/>
            <person name="Dong L."/>
            <person name="Huang Y."/>
            <person name="Li L."/>
            <person name="Xi Y."/>
            <person name="Qi Q."/>
            <person name="Li W."/>
            <person name="Zhang B."/>
            <person name="Hu W."/>
            <person name="Zhang Y."/>
            <person name="Tian X."/>
            <person name="Jiao Y."/>
            <person name="Liang X."/>
            <person name="Jin J."/>
            <person name="Gao L."/>
            <person name="Zheng W."/>
            <person name="Hao B."/>
            <person name="Liu S.-M."/>
            <person name="Wang W."/>
            <person name="Yuan L."/>
            <person name="Cao M."/>
            <person name="McDermott J."/>
            <person name="Samudrala R."/>
            <person name="Wang J."/>
            <person name="Wong G.K.-S."/>
            <person name="Yang H."/>
        </authorList>
    </citation>
    <scope>NUCLEOTIDE SEQUENCE [LARGE SCALE GENOMIC DNA]</scope>
    <source>
        <strain>cv. Nipponbare</strain>
    </source>
</reference>
<reference key="7">
    <citation type="journal article" date="2003" name="Science">
        <title>Collection, mapping, and annotation of over 28,000 cDNA clones from japonica rice.</title>
        <authorList>
            <consortium name="The rice full-length cDNA consortium"/>
        </authorList>
    </citation>
    <scope>NUCLEOTIDE SEQUENCE [LARGE SCALE MRNA]</scope>
    <source>
        <strain>cv. Nipponbare</strain>
    </source>
</reference>
<reference key="8">
    <citation type="journal article" date="2006" name="Proc. Natl. Acad. Sci. U.S.A.">
        <title>Overexpressing a NAM, ATAF, and CUC (NAC) transcription factor enhances drought resistance and salt tolerance in rice.</title>
        <authorList>
            <person name="Hu H."/>
            <person name="Dai M."/>
            <person name="Yao J."/>
            <person name="Xiao B."/>
            <person name="Li X."/>
            <person name="Zhang Q."/>
            <person name="Xiong L."/>
        </authorList>
    </citation>
    <scope>NUCLEOTIDE SEQUENCE [MRNA] OF 3-316</scope>
    <scope>FUNCTION</scope>
    <scope>SUBCELLULAR LOCATION</scope>
    <scope>TISSUE SPECIFICITY</scope>
    <scope>INDUCTION</scope>
</reference>
<reference key="9">
    <citation type="journal article" date="2003" name="DNA Res.">
        <title>Comprehensive analysis of NAC family genes in Oryza sativa and Arabidopsis thaliana.</title>
        <authorList>
            <person name="Ooka H."/>
            <person name="Satoh K."/>
            <person name="Doi K."/>
            <person name="Nagata T."/>
            <person name="Otomo Y."/>
            <person name="Murakami K."/>
            <person name="Matsubara K."/>
            <person name="Osato N."/>
            <person name="Kawai J."/>
            <person name="Carninci P."/>
            <person name="Hayashizaki Y."/>
            <person name="Suzuki K."/>
            <person name="Kojima K."/>
            <person name="Takahara Y."/>
            <person name="Yamamoto K."/>
            <person name="Kikuchi S."/>
        </authorList>
    </citation>
    <scope>GENE FAMILY</scope>
    <scope>NOMENCLATURE</scope>
</reference>
<reference key="10">
    <citation type="journal article" date="2010" name="Mol. Genet. Genomics">
        <title>The abiotic stress-responsive NAC-type transcription factor OsNAC5 regulates stress-inducible genes and stress tolerance in rice.</title>
        <authorList>
            <person name="Takasaki H."/>
            <person name="Maruyama K."/>
            <person name="Kidokoro S."/>
            <person name="Ito Y."/>
            <person name="Fujita Y."/>
            <person name="Shinozaki K."/>
            <person name="Yamaguchi-Shinozaki K."/>
            <person name="Nakashima K."/>
        </authorList>
    </citation>
    <scope>FUNCTION</scope>
    <scope>INTERACTION WITH NAC071</scope>
    <scope>INDUCTION</scope>
</reference>
<reference key="11">
    <citation type="journal article" date="2011" name="Protein Cell">
        <title>A structural view of the conserved domain of rice stress-responsive NAC1.</title>
        <authorList>
            <person name="Chen Q."/>
            <person name="Wang Q."/>
            <person name="Xiong L."/>
            <person name="Lou Z."/>
        </authorList>
    </citation>
    <scope>X-RAY CRYSTALLOGRAPHY (2.60 ANGSTROMS) OF 3-176</scope>
    <scope>HOMODIMER</scope>
</reference>
<feature type="chain" id="PRO_0000442723" description="NAC domain-containing protein 2">
    <location>
        <begin position="1"/>
        <end position="316"/>
    </location>
</feature>
<feature type="domain" description="NAC" evidence="1">
    <location>
        <begin position="17"/>
        <end position="170"/>
    </location>
</feature>
<feature type="DNA-binding region" evidence="1">
    <location>
        <begin position="114"/>
        <end position="176"/>
    </location>
</feature>
<feature type="region of interest" description="Disordered" evidence="2">
    <location>
        <begin position="185"/>
        <end position="210"/>
    </location>
</feature>
<feature type="compositionally biased region" description="Polar residues" evidence="2">
    <location>
        <begin position="190"/>
        <end position="200"/>
    </location>
</feature>
<feature type="turn" evidence="13">
    <location>
        <begin position="14"/>
        <end position="16"/>
    </location>
</feature>
<feature type="helix" evidence="13">
    <location>
        <begin position="27"/>
        <end position="33"/>
    </location>
</feature>
<feature type="helix" evidence="13">
    <location>
        <begin position="35"/>
        <end position="39"/>
    </location>
</feature>
<feature type="strand" evidence="13">
    <location>
        <begin position="45"/>
        <end position="47"/>
    </location>
</feature>
<feature type="helix" evidence="13">
    <location>
        <begin position="54"/>
        <end position="56"/>
    </location>
</feature>
<feature type="helix" evidence="13">
    <location>
        <begin position="59"/>
        <end position="61"/>
    </location>
</feature>
<feature type="helix" evidence="13">
    <location>
        <begin position="63"/>
        <end position="65"/>
    </location>
</feature>
<feature type="strand" evidence="13">
    <location>
        <begin position="70"/>
        <end position="78"/>
    </location>
</feature>
<feature type="strand" evidence="13">
    <location>
        <begin position="91"/>
        <end position="93"/>
    </location>
</feature>
<feature type="strand" evidence="13">
    <location>
        <begin position="96"/>
        <end position="100"/>
    </location>
</feature>
<feature type="strand" evidence="13">
    <location>
        <begin position="105"/>
        <end position="107"/>
    </location>
</feature>
<feature type="strand" evidence="13">
    <location>
        <begin position="110"/>
        <end position="112"/>
    </location>
</feature>
<feature type="strand" evidence="13">
    <location>
        <begin position="115"/>
        <end position="126"/>
    </location>
</feature>
<feature type="strand" evidence="13">
    <location>
        <begin position="131"/>
        <end position="142"/>
    </location>
</feature>
<feature type="strand" evidence="13">
    <location>
        <begin position="160"/>
        <end position="170"/>
    </location>
</feature>
<keyword id="KW-0002">3D-structure</keyword>
<keyword id="KW-0010">Activator</keyword>
<keyword id="KW-0238">DNA-binding</keyword>
<keyword id="KW-0539">Nucleus</keyword>
<keyword id="KW-1185">Reference proteome</keyword>
<keyword id="KW-0346">Stress response</keyword>
<keyword id="KW-0804">Transcription</keyword>
<keyword id="KW-0805">Transcription regulation</keyword>
<dbReference type="EMBL" id="AY596808">
    <property type="protein sequence ID" value="AAT02360.1"/>
    <property type="molecule type" value="mRNA"/>
</dbReference>
<dbReference type="EMBL" id="AC135594">
    <property type="protein sequence ID" value="AAR89838.1"/>
    <property type="molecule type" value="Genomic_DNA"/>
</dbReference>
<dbReference type="EMBL" id="DP000009">
    <property type="protein sequence ID" value="ABF99536.1"/>
    <property type="molecule type" value="Genomic_DNA"/>
</dbReference>
<dbReference type="EMBL" id="AP008209">
    <property type="protein sequence ID" value="BAF13596.1"/>
    <property type="molecule type" value="Genomic_DNA"/>
</dbReference>
<dbReference type="EMBL" id="AP014959">
    <property type="protein sequence ID" value="BAS87028.1"/>
    <property type="molecule type" value="Genomic_DNA"/>
</dbReference>
<dbReference type="EMBL" id="CM000140">
    <property type="protein sequence ID" value="EAZ29041.1"/>
    <property type="molecule type" value="Genomic_DNA"/>
</dbReference>
<dbReference type="EMBL" id="AK067690">
    <property type="protein sequence ID" value="BAG90542.1"/>
    <property type="molecule type" value="mRNA"/>
</dbReference>
<dbReference type="EMBL" id="AK099245">
    <property type="protein sequence ID" value="BAG94018.1"/>
    <property type="molecule type" value="mRNA"/>
</dbReference>
<dbReference type="EMBL" id="AK104551">
    <property type="protein sequence ID" value="BAG96778.1"/>
    <property type="molecule type" value="mRNA"/>
</dbReference>
<dbReference type="EMBL" id="AK104712">
    <property type="protein sequence ID" value="BAG96896.1"/>
    <property type="molecule type" value="mRNA"/>
</dbReference>
<dbReference type="EMBL" id="DQ394702">
    <property type="protein sequence ID" value="ABD52007.1"/>
    <property type="molecule type" value="mRNA"/>
</dbReference>
<dbReference type="PDB" id="3ULX">
    <property type="method" value="X-ray"/>
    <property type="resolution" value="2.60 A"/>
    <property type="chains" value="A=3-176"/>
</dbReference>
<dbReference type="PDBsum" id="3ULX"/>
<dbReference type="SMR" id="Q75HE5"/>
<dbReference type="FunCoup" id="Q75HE5">
    <property type="interactions" value="3"/>
</dbReference>
<dbReference type="STRING" id="39947.Q75HE5"/>
<dbReference type="PaxDb" id="39947-Q75HE5"/>
<dbReference type="EnsemblPlants" id="Os03t0815100-01">
    <property type="protein sequence ID" value="Os03t0815100-01"/>
    <property type="gene ID" value="Os03g0815100"/>
</dbReference>
<dbReference type="GeneID" id="4334553"/>
<dbReference type="Gramene" id="Os03t0815100-01">
    <property type="protein sequence ID" value="Os03t0815100-01"/>
    <property type="gene ID" value="Os03g0815100"/>
</dbReference>
<dbReference type="KEGG" id="dosa:Os03g0815100"/>
<dbReference type="KEGG" id="osa:4334553"/>
<dbReference type="eggNOG" id="ENOG502QRBC">
    <property type="taxonomic scope" value="Eukaryota"/>
</dbReference>
<dbReference type="HOGENOM" id="CLU_035664_5_2_1"/>
<dbReference type="InParanoid" id="Q75HE5"/>
<dbReference type="OMA" id="HSRTHSW"/>
<dbReference type="OrthoDB" id="1921961at2759"/>
<dbReference type="PlantReactome" id="R-OSA-9627499">
    <property type="pathway name" value="SNAC1 transcription network involved in drought and salinity tolerance"/>
</dbReference>
<dbReference type="EvolutionaryTrace" id="Q75HE5"/>
<dbReference type="Proteomes" id="UP000000763">
    <property type="component" value="Chromosome 3"/>
</dbReference>
<dbReference type="Proteomes" id="UP000007752">
    <property type="component" value="Chromosome 3"/>
</dbReference>
<dbReference type="Proteomes" id="UP000059680">
    <property type="component" value="Chromosome 3"/>
</dbReference>
<dbReference type="GO" id="GO:0005634">
    <property type="term" value="C:nucleus"/>
    <property type="evidence" value="ECO:0007669"/>
    <property type="project" value="UniProtKB-SubCell"/>
</dbReference>
<dbReference type="GO" id="GO:0042803">
    <property type="term" value="F:protein homodimerization activity"/>
    <property type="evidence" value="ECO:0000353"/>
    <property type="project" value="UniProtKB"/>
</dbReference>
<dbReference type="GO" id="GO:0043565">
    <property type="term" value="F:sequence-specific DNA binding"/>
    <property type="evidence" value="ECO:0000314"/>
    <property type="project" value="UniProtKB"/>
</dbReference>
<dbReference type="GO" id="GO:1901002">
    <property type="term" value="P:positive regulation of response to salt stress"/>
    <property type="evidence" value="ECO:0000315"/>
    <property type="project" value="UniProtKB"/>
</dbReference>
<dbReference type="GO" id="GO:1902584">
    <property type="term" value="P:positive regulation of response to water deprivation"/>
    <property type="evidence" value="ECO:0000315"/>
    <property type="project" value="UniProtKB"/>
</dbReference>
<dbReference type="GO" id="GO:0006355">
    <property type="term" value="P:regulation of DNA-templated transcription"/>
    <property type="evidence" value="ECO:0000314"/>
    <property type="project" value="UniProtKB"/>
</dbReference>
<dbReference type="FunFam" id="2.170.150.80:FF:000004">
    <property type="entry name" value="NAC transcription factor"/>
    <property type="match status" value="1"/>
</dbReference>
<dbReference type="Gene3D" id="2.170.150.80">
    <property type="entry name" value="NAC domain"/>
    <property type="match status" value="1"/>
</dbReference>
<dbReference type="InterPro" id="IPR003441">
    <property type="entry name" value="NAC-dom"/>
</dbReference>
<dbReference type="InterPro" id="IPR036093">
    <property type="entry name" value="NAC_dom_sf"/>
</dbReference>
<dbReference type="PANTHER" id="PTHR31719:SF249">
    <property type="entry name" value="NAC DOMAIN-CONTAINING PROTEIN 2"/>
    <property type="match status" value="1"/>
</dbReference>
<dbReference type="PANTHER" id="PTHR31719">
    <property type="entry name" value="NAC TRANSCRIPTION FACTOR 56"/>
    <property type="match status" value="1"/>
</dbReference>
<dbReference type="Pfam" id="PF02365">
    <property type="entry name" value="NAM"/>
    <property type="match status" value="1"/>
</dbReference>
<dbReference type="SUPFAM" id="SSF101941">
    <property type="entry name" value="NAC domain"/>
    <property type="match status" value="1"/>
</dbReference>
<dbReference type="PROSITE" id="PS51005">
    <property type="entry name" value="NAC"/>
    <property type="match status" value="1"/>
</dbReference>
<comment type="function">
    <text evidence="3 4">Transcription factor that possesses transactivation activity (PubMed:16924117, PubMed:20632034). Transcription activator involved in response to abiotic stresses. Plays a positive role during dehydration and salt stress. Binds specifically to the 5'-CATGTG-3' motif found in promoters of stress-responsive genes (PubMed:16924117).</text>
</comment>
<comment type="subunit">
    <text evidence="4 5">Forms homodimer (PubMed:21337010). Interacts with NAC071 (PubMed:20632034).</text>
</comment>
<comment type="subcellular location">
    <subcellularLocation>
        <location evidence="1 3">Nucleus</location>
    </subcellularLocation>
</comment>
<comment type="tissue specificity">
    <text evidence="3">Expressed in roots and stamens.</text>
</comment>
<comment type="induction">
    <text evidence="3 4">Induced by drought stress, salt stress and cold stress (PubMed:16924117, PubMed:20632034). Induced by abscisic acid (ABA) (PubMed:16924117). Induced by methyl jasmonate (PubMed:20632034).</text>
</comment>
<comment type="domain">
    <text evidence="1">The NAC domain includes a DNA binding domain and a dimerization domain.</text>
</comment>
<comment type="miscellaneous">
    <text evidence="3">Plants overexpressing NAC002 exhibit improved tolerance to drought and salt stresses.</text>
</comment>
<proteinExistence type="evidence at protein level"/>
<evidence type="ECO:0000255" key="1">
    <source>
        <dbReference type="PROSITE-ProRule" id="PRU00353"/>
    </source>
</evidence>
<evidence type="ECO:0000256" key="2">
    <source>
        <dbReference type="SAM" id="MobiDB-lite"/>
    </source>
</evidence>
<evidence type="ECO:0000269" key="3">
    <source>
    </source>
</evidence>
<evidence type="ECO:0000269" key="4">
    <source>
    </source>
</evidence>
<evidence type="ECO:0000269" key="5">
    <source>
    </source>
</evidence>
<evidence type="ECO:0000303" key="6">
    <source>
    </source>
</evidence>
<evidence type="ECO:0000303" key="7">
    <source>
    </source>
</evidence>
<evidence type="ECO:0000303" key="8">
    <source ref="1"/>
</evidence>
<evidence type="ECO:0000312" key="9">
    <source>
        <dbReference type="EMBL" id="AAR89838.1"/>
    </source>
</evidence>
<evidence type="ECO:0000312" key="10">
    <source>
        <dbReference type="EMBL" id="ABF99536.1"/>
    </source>
</evidence>
<evidence type="ECO:0000312" key="11">
    <source>
        <dbReference type="EMBL" id="BAF13596.1"/>
    </source>
</evidence>
<evidence type="ECO:0000312" key="12">
    <source>
        <dbReference type="EMBL" id="EAZ29041.1"/>
    </source>
</evidence>
<evidence type="ECO:0007829" key="13">
    <source>
        <dbReference type="PDB" id="3ULX"/>
    </source>
</evidence>
<protein>
    <recommendedName>
        <fullName evidence="6">NAC domain-containing protein 2</fullName>
        <shortName evidence="6">ONAC002</shortName>
    </recommendedName>
    <alternativeName>
        <fullName evidence="8">OsNAC19</fullName>
    </alternativeName>
    <alternativeName>
        <fullName evidence="7">Protein STRESS-RESPONSIVE NAC 1</fullName>
    </alternativeName>
</protein>